<gene>
    <name evidence="1" type="primary">ppaC</name>
    <name type="ordered locus">spyM18_0434</name>
</gene>
<keyword id="KW-0963">Cytoplasm</keyword>
<keyword id="KW-0378">Hydrolase</keyword>
<keyword id="KW-0464">Manganese</keyword>
<keyword id="KW-0479">Metal-binding</keyword>
<comment type="catalytic activity">
    <reaction evidence="1">
        <text>diphosphate + H2O = 2 phosphate + H(+)</text>
        <dbReference type="Rhea" id="RHEA:24576"/>
        <dbReference type="ChEBI" id="CHEBI:15377"/>
        <dbReference type="ChEBI" id="CHEBI:15378"/>
        <dbReference type="ChEBI" id="CHEBI:33019"/>
        <dbReference type="ChEBI" id="CHEBI:43474"/>
        <dbReference type="EC" id="3.6.1.1"/>
    </reaction>
</comment>
<comment type="cofactor">
    <cofactor evidence="1">
        <name>Mn(2+)</name>
        <dbReference type="ChEBI" id="CHEBI:29035"/>
    </cofactor>
    <text evidence="1">Binds 2 manganese ions per subunit.</text>
</comment>
<comment type="subcellular location">
    <subcellularLocation>
        <location evidence="1">Cytoplasm</location>
    </subcellularLocation>
</comment>
<comment type="similarity">
    <text evidence="1">Belongs to the PPase class C family.</text>
</comment>
<proteinExistence type="inferred from homology"/>
<evidence type="ECO:0000255" key="1">
    <source>
        <dbReference type="HAMAP-Rule" id="MF_00207"/>
    </source>
</evidence>
<name>PPAC_STRP8</name>
<organism>
    <name type="scientific">Streptococcus pyogenes serotype M18 (strain MGAS8232)</name>
    <dbReference type="NCBI Taxonomy" id="186103"/>
    <lineage>
        <taxon>Bacteria</taxon>
        <taxon>Bacillati</taxon>
        <taxon>Bacillota</taxon>
        <taxon>Bacilli</taxon>
        <taxon>Lactobacillales</taxon>
        <taxon>Streptococcaceae</taxon>
        <taxon>Streptococcus</taxon>
    </lineage>
</organism>
<sequence>MSKILVFGHQNPDTDAIASSYAFDYLSQKAFGLDTEVVALGTPNEETAFALDYFGVEAPRVVESAKAQGSEQVILTDHNEFQQSIADIREVEVYGVVDHHRVANFETANPLYMRVEPVGSASSIVYRMFKENGIEVPKAIAGMLLSGLISDTLLLKSPTTHVSDHLVAEELAELAEVNLEDYGMALLKAGTNLASKSEVELIGIDAKTFELNGNAVRVAQVNTVDIAEVLERQEAIEAAIKDAMAAEGYSDFVLMITDIVNSNSEILAIGANMDKVEAAFNFTLDNNHAFLAGAVSRKKQVVPQLTESFGA</sequence>
<dbReference type="EC" id="3.6.1.1" evidence="1"/>
<dbReference type="EMBL" id="AE009949">
    <property type="protein sequence ID" value="AAL97172.1"/>
    <property type="molecule type" value="Genomic_DNA"/>
</dbReference>
<dbReference type="RefSeq" id="WP_002990948.1">
    <property type="nucleotide sequence ID" value="NC_003485.1"/>
</dbReference>
<dbReference type="SMR" id="P65759"/>
<dbReference type="KEGG" id="spm:spyM18_0434"/>
<dbReference type="HOGENOM" id="CLU_025243_0_1_9"/>
<dbReference type="GO" id="GO:0005737">
    <property type="term" value="C:cytoplasm"/>
    <property type="evidence" value="ECO:0007669"/>
    <property type="project" value="UniProtKB-SubCell"/>
</dbReference>
<dbReference type="GO" id="GO:0004427">
    <property type="term" value="F:inorganic diphosphate phosphatase activity"/>
    <property type="evidence" value="ECO:0007669"/>
    <property type="project" value="UniProtKB-UniRule"/>
</dbReference>
<dbReference type="GO" id="GO:0030145">
    <property type="term" value="F:manganese ion binding"/>
    <property type="evidence" value="ECO:0007669"/>
    <property type="project" value="UniProtKB-UniRule"/>
</dbReference>
<dbReference type="FunFam" id="3.10.310.20:FF:000001">
    <property type="entry name" value="Probable manganese-dependent inorganic pyrophosphatase"/>
    <property type="match status" value="1"/>
</dbReference>
<dbReference type="FunFam" id="3.90.1640.10:FF:000001">
    <property type="entry name" value="Probable manganese-dependent inorganic pyrophosphatase"/>
    <property type="match status" value="1"/>
</dbReference>
<dbReference type="Gene3D" id="3.10.310.20">
    <property type="entry name" value="DHHA2 domain"/>
    <property type="match status" value="1"/>
</dbReference>
<dbReference type="Gene3D" id="3.90.1640.10">
    <property type="entry name" value="inorganic pyrophosphatase (n-terminal core)"/>
    <property type="match status" value="1"/>
</dbReference>
<dbReference type="HAMAP" id="MF_00207">
    <property type="entry name" value="PPase_C"/>
    <property type="match status" value="1"/>
</dbReference>
<dbReference type="InterPro" id="IPR001667">
    <property type="entry name" value="DDH_dom"/>
</dbReference>
<dbReference type="InterPro" id="IPR038763">
    <property type="entry name" value="DHH_sf"/>
</dbReference>
<dbReference type="InterPro" id="IPR004097">
    <property type="entry name" value="DHHA2"/>
</dbReference>
<dbReference type="InterPro" id="IPR038222">
    <property type="entry name" value="DHHA2_dom_sf"/>
</dbReference>
<dbReference type="InterPro" id="IPR022934">
    <property type="entry name" value="Mn-dep_inorganic_PyrPase"/>
</dbReference>
<dbReference type="InterPro" id="IPR051319">
    <property type="entry name" value="Oligoribo/pAp-PDE_c-di-AMP_PDE"/>
</dbReference>
<dbReference type="NCBIfam" id="NF003877">
    <property type="entry name" value="PRK05427.1"/>
    <property type="match status" value="1"/>
</dbReference>
<dbReference type="PANTHER" id="PTHR47618">
    <property type="entry name" value="BIFUNCTIONAL OLIGORIBONUCLEASE AND PAP PHOSPHATASE NRNA"/>
    <property type="match status" value="1"/>
</dbReference>
<dbReference type="PANTHER" id="PTHR47618:SF1">
    <property type="entry name" value="BIFUNCTIONAL OLIGORIBONUCLEASE AND PAP PHOSPHATASE NRNA"/>
    <property type="match status" value="1"/>
</dbReference>
<dbReference type="Pfam" id="PF01368">
    <property type="entry name" value="DHH"/>
    <property type="match status" value="1"/>
</dbReference>
<dbReference type="Pfam" id="PF02833">
    <property type="entry name" value="DHHA2"/>
    <property type="match status" value="1"/>
</dbReference>
<dbReference type="SMART" id="SM01131">
    <property type="entry name" value="DHHA2"/>
    <property type="match status" value="1"/>
</dbReference>
<dbReference type="SUPFAM" id="SSF64182">
    <property type="entry name" value="DHH phosphoesterases"/>
    <property type="match status" value="1"/>
</dbReference>
<reference key="1">
    <citation type="journal article" date="2002" name="Proc. Natl. Acad. Sci. U.S.A.">
        <title>Genome sequence and comparative microarray analysis of serotype M18 group A Streptococcus strains associated with acute rheumatic fever outbreaks.</title>
        <authorList>
            <person name="Smoot J.C."/>
            <person name="Barbian K.D."/>
            <person name="Van Gompel J.J."/>
            <person name="Smoot L.M."/>
            <person name="Chaussee M.S."/>
            <person name="Sylva G.L."/>
            <person name="Sturdevant D.E."/>
            <person name="Ricklefs S.M."/>
            <person name="Porcella S.F."/>
            <person name="Parkins L.D."/>
            <person name="Beres S.B."/>
            <person name="Campbell D.S."/>
            <person name="Smith T.M."/>
            <person name="Zhang Q."/>
            <person name="Kapur V."/>
            <person name="Daly J.A."/>
            <person name="Veasy L.G."/>
            <person name="Musser J.M."/>
        </authorList>
    </citation>
    <scope>NUCLEOTIDE SEQUENCE [LARGE SCALE GENOMIC DNA]</scope>
    <source>
        <strain>MGAS8232</strain>
    </source>
</reference>
<accession>P65759</accession>
<accession>Q8K8I2</accession>
<accession>Q9A1A2</accession>
<feature type="chain" id="PRO_0000158596" description="Probable manganese-dependent inorganic pyrophosphatase">
    <location>
        <begin position="1"/>
        <end position="311"/>
    </location>
</feature>
<feature type="binding site" evidence="1">
    <location>
        <position position="9"/>
    </location>
    <ligand>
        <name>Mn(2+)</name>
        <dbReference type="ChEBI" id="CHEBI:29035"/>
        <label>1</label>
    </ligand>
</feature>
<feature type="binding site" evidence="1">
    <location>
        <position position="13"/>
    </location>
    <ligand>
        <name>Mn(2+)</name>
        <dbReference type="ChEBI" id="CHEBI:29035"/>
        <label>1</label>
    </ligand>
</feature>
<feature type="binding site" evidence="1">
    <location>
        <position position="15"/>
    </location>
    <ligand>
        <name>Mn(2+)</name>
        <dbReference type="ChEBI" id="CHEBI:29035"/>
        <label>2</label>
    </ligand>
</feature>
<feature type="binding site" evidence="1">
    <location>
        <position position="77"/>
    </location>
    <ligand>
        <name>Mn(2+)</name>
        <dbReference type="ChEBI" id="CHEBI:29035"/>
        <label>1</label>
    </ligand>
</feature>
<feature type="binding site" evidence="1">
    <location>
        <position position="77"/>
    </location>
    <ligand>
        <name>Mn(2+)</name>
        <dbReference type="ChEBI" id="CHEBI:29035"/>
        <label>2</label>
    </ligand>
</feature>
<feature type="binding site" evidence="1">
    <location>
        <position position="99"/>
    </location>
    <ligand>
        <name>Mn(2+)</name>
        <dbReference type="ChEBI" id="CHEBI:29035"/>
        <label>2</label>
    </ligand>
</feature>
<feature type="binding site" evidence="1">
    <location>
        <position position="151"/>
    </location>
    <ligand>
        <name>Mn(2+)</name>
        <dbReference type="ChEBI" id="CHEBI:29035"/>
        <label>2</label>
    </ligand>
</feature>
<protein>
    <recommendedName>
        <fullName evidence="1">Probable manganese-dependent inorganic pyrophosphatase</fullName>
        <ecNumber evidence="1">3.6.1.1</ecNumber>
    </recommendedName>
    <alternativeName>
        <fullName evidence="1">Pyrophosphate phospho-hydrolase</fullName>
        <shortName evidence="1">PPase</shortName>
    </alternativeName>
</protein>